<proteinExistence type="evidence at protein level"/>
<organism>
    <name type="scientific">Kutzneria sp. (strain 744)</name>
    <dbReference type="NCBI Taxonomy" id="345341"/>
    <lineage>
        <taxon>Bacteria</taxon>
        <taxon>Bacillati</taxon>
        <taxon>Actinomycetota</taxon>
        <taxon>Actinomycetes</taxon>
        <taxon>Pseudonocardiales</taxon>
        <taxon>Pseudonocardiaceae</taxon>
        <taxon>Kutzneria</taxon>
    </lineage>
</organism>
<dbReference type="EC" id="1.14.19.9" evidence="3"/>
<dbReference type="EMBL" id="EU074211">
    <property type="protein sequence ID" value="ABV56597.1"/>
    <property type="molecule type" value="Genomic_DNA"/>
</dbReference>
<dbReference type="EMBL" id="KK037166">
    <property type="protein sequence ID" value="EWM18621.1"/>
    <property type="molecule type" value="Genomic_DNA"/>
</dbReference>
<dbReference type="RefSeq" id="WP_043726236.1">
    <property type="nucleotide sequence ID" value="NZ_KK037166.1"/>
</dbReference>
<dbReference type="SMR" id="A8CF75"/>
<dbReference type="STRING" id="345341.KUTG_08925"/>
<dbReference type="KEGG" id="ag:ABV56597"/>
<dbReference type="eggNOG" id="COG0665">
    <property type="taxonomic scope" value="Bacteria"/>
</dbReference>
<dbReference type="HOGENOM" id="CLU_022247_1_0_11"/>
<dbReference type="OrthoDB" id="8868802at2"/>
<dbReference type="BRENDA" id="1.14.19.9">
    <property type="organism ID" value="13386"/>
</dbReference>
<dbReference type="Proteomes" id="UP000030658">
    <property type="component" value="Unassembled WGS sequence"/>
</dbReference>
<dbReference type="GO" id="GO:0004497">
    <property type="term" value="F:monooxygenase activity"/>
    <property type="evidence" value="ECO:0007669"/>
    <property type="project" value="InterPro"/>
</dbReference>
<dbReference type="GO" id="GO:0000166">
    <property type="term" value="F:nucleotide binding"/>
    <property type="evidence" value="ECO:0007669"/>
    <property type="project" value="UniProtKB-KW"/>
</dbReference>
<dbReference type="Gene3D" id="3.50.50.60">
    <property type="entry name" value="FAD/NAD(P)-binding domain"/>
    <property type="match status" value="1"/>
</dbReference>
<dbReference type="InterPro" id="IPR036188">
    <property type="entry name" value="FAD/NAD-bd_sf"/>
</dbReference>
<dbReference type="InterPro" id="IPR050816">
    <property type="entry name" value="Flavin-dep_Halogenase_NPB"/>
</dbReference>
<dbReference type="InterPro" id="IPR006905">
    <property type="entry name" value="Flavin_halogenase"/>
</dbReference>
<dbReference type="InterPro" id="IPR033856">
    <property type="entry name" value="Trp_halogen"/>
</dbReference>
<dbReference type="PANTHER" id="PTHR43747">
    <property type="entry name" value="FAD-BINDING PROTEIN"/>
    <property type="match status" value="1"/>
</dbReference>
<dbReference type="PANTHER" id="PTHR43747:SF4">
    <property type="entry name" value="FLAVIN-DEPENDENT TRYPTOPHAN HALOGENASE"/>
    <property type="match status" value="1"/>
</dbReference>
<dbReference type="Pfam" id="PF04820">
    <property type="entry name" value="Trp_halogenase"/>
    <property type="match status" value="1"/>
</dbReference>
<dbReference type="PIRSF" id="PIRSF011396">
    <property type="entry name" value="Trp_halogenase"/>
    <property type="match status" value="1"/>
</dbReference>
<dbReference type="SUPFAM" id="SSF51905">
    <property type="entry name" value="FAD/NAD(P)-binding domain"/>
    <property type="match status" value="1"/>
</dbReference>
<reference key="1">
    <citation type="journal article" date="2007" name="Proc. Natl. Acad. Sci. U.S.A.">
        <title>Cloning and characterization of the biosynthetic gene cluster for kutznerides.</title>
        <authorList>
            <person name="Fujimori D.G."/>
            <person name="Hrvatin S."/>
            <person name="Neumann C.S."/>
            <person name="Strieker M."/>
            <person name="Marahiel M.A."/>
            <person name="Walsh C.T."/>
        </authorList>
    </citation>
    <scope>NUCLEOTIDE SEQUENCE [GENOMIC DNA]</scope>
    <source>
        <strain>744</strain>
    </source>
</reference>
<reference key="2">
    <citation type="submission" date="2009-10" db="EMBL/GenBank/DDBJ databases">
        <title>The genome sequence of Kutzneria sp. strain 744.</title>
        <authorList>
            <consortium name="The Broad Institute Genome Sequencing Platform"/>
            <consortium name="Broad Institute Microbial Sequencing Center"/>
            <person name="Fischbach M."/>
            <person name="Godfrey P."/>
            <person name="Ward D."/>
            <person name="Young S."/>
            <person name="Zeng Q."/>
            <person name="Koehrsen M."/>
            <person name="Alvarado L."/>
            <person name="Berlin A.M."/>
            <person name="Bochicchio J."/>
            <person name="Borenstein D."/>
            <person name="Chapman S.B."/>
            <person name="Chen Z."/>
            <person name="Engels R."/>
            <person name="Freedman E."/>
            <person name="Gellesch M."/>
            <person name="Goldberg J."/>
            <person name="Griggs A."/>
            <person name="Gujja S."/>
            <person name="Heilman E.R."/>
            <person name="Heiman D.I."/>
            <person name="Hepburn T.A."/>
            <person name="Howarth C."/>
            <person name="Jen D."/>
            <person name="Larson L."/>
            <person name="Lewis B."/>
            <person name="Mehta T."/>
            <person name="Park D."/>
            <person name="Pearson M."/>
            <person name="Richards J."/>
            <person name="Roberts A."/>
            <person name="Saif S."/>
            <person name="Shea T.D."/>
            <person name="Shenoy N."/>
            <person name="Sisk P."/>
            <person name="Stolte C."/>
            <person name="Sykes S.N."/>
            <person name="Thomson T."/>
            <person name="Walk T."/>
            <person name="White J."/>
            <person name="Yandava C."/>
            <person name="Straight P."/>
            <person name="Clardy J."/>
            <person name="Hung D."/>
            <person name="Kolter R."/>
            <person name="Mekalanos J."/>
            <person name="Walker S."/>
            <person name="Walsh C.T."/>
            <person name="Wieland-Brown L.C."/>
            <person name="Haas B."/>
            <person name="Nusbaum C."/>
            <person name="Birren B."/>
        </authorList>
    </citation>
    <scope>NUCLEOTIDE SEQUENCE [LARGE SCALE GENOMIC DNA]</scope>
    <source>
        <strain>744</strain>
    </source>
</reference>
<reference key="3">
    <citation type="journal article" date="2008" name="J. Am. Chem. Soc.">
        <title>Tandem action of the O2- and FADH2-dependent halogenases KtzQ and KtzR produce 6,7-dichlorotryptophan for kutzneride assembly.</title>
        <authorList>
            <person name="Heemstra J.R. Jr."/>
            <person name="Walsh C.T."/>
        </authorList>
    </citation>
    <scope>FUNCTION</scope>
    <scope>CATALYTIC ACTIVITY</scope>
    <scope>BIOPHYSICOCHEMICAL PROPERTIES</scope>
    <source>
        <strain>744</strain>
    </source>
</reference>
<name>TRP7H_KUTS7</name>
<feature type="chain" id="PRO_0000459028" description="Tryptophan 7-halogenase KtzQ">
    <location>
        <begin position="1"/>
        <end position="533"/>
    </location>
</feature>
<feature type="active site" evidence="1">
    <location>
        <position position="80"/>
    </location>
</feature>
<feature type="binding site" evidence="2">
    <location>
        <position position="14"/>
    </location>
    <ligand>
        <name>FAD</name>
        <dbReference type="ChEBI" id="CHEBI:57692"/>
    </ligand>
</feature>
<feature type="binding site" evidence="2">
    <location>
        <position position="16"/>
    </location>
    <ligand>
        <name>FAD</name>
        <dbReference type="ChEBI" id="CHEBI:57692"/>
    </ligand>
</feature>
<feature type="binding site" evidence="2">
    <location>
        <position position="17"/>
    </location>
    <ligand>
        <name>FAD</name>
        <dbReference type="ChEBI" id="CHEBI:57692"/>
    </ligand>
</feature>
<feature type="binding site" evidence="2">
    <location>
        <position position="40"/>
    </location>
    <ligand>
        <name>FAD</name>
        <dbReference type="ChEBI" id="CHEBI:57692"/>
    </ligand>
</feature>
<feature type="binding site" evidence="2">
    <location>
        <position position="50"/>
    </location>
    <ligand>
        <name>FAD</name>
        <dbReference type="ChEBI" id="CHEBI:57692"/>
    </ligand>
</feature>
<feature type="binding site" evidence="2">
    <location>
        <position position="51"/>
    </location>
    <ligand>
        <name>FAD</name>
        <dbReference type="ChEBI" id="CHEBI:57692"/>
    </ligand>
</feature>
<feature type="binding site" evidence="2">
    <location>
        <position position="359"/>
    </location>
    <ligand>
        <name>L-tryptophan</name>
        <dbReference type="ChEBI" id="CHEBI:57912"/>
    </ligand>
</feature>
<feature type="binding site" evidence="2">
    <location>
        <position position="361"/>
    </location>
    <ligand>
        <name>chloride</name>
        <dbReference type="ChEBI" id="CHEBI:17996"/>
    </ligand>
</feature>
<feature type="binding site" evidence="2">
    <location>
        <position position="362"/>
    </location>
    <ligand>
        <name>chloride</name>
        <dbReference type="ChEBI" id="CHEBI:17996"/>
    </ligand>
</feature>
<feature type="binding site" evidence="2">
    <location>
        <position position="363"/>
    </location>
    <ligand>
        <name>FAD</name>
        <dbReference type="ChEBI" id="CHEBI:57692"/>
    </ligand>
</feature>
<feature type="binding site" evidence="2">
    <location>
        <position position="456"/>
    </location>
    <ligand>
        <name>L-tryptophan</name>
        <dbReference type="ChEBI" id="CHEBI:57912"/>
    </ligand>
</feature>
<feature type="binding site" evidence="2">
    <location>
        <position position="457"/>
    </location>
    <ligand>
        <name>L-tryptophan</name>
        <dbReference type="ChEBI" id="CHEBI:57912"/>
    </ligand>
</feature>
<feature type="binding site" evidence="2">
    <location>
        <position position="463"/>
    </location>
    <ligand>
        <name>L-tryptophan</name>
        <dbReference type="ChEBI" id="CHEBI:57912"/>
    </ligand>
</feature>
<feature type="binding site" evidence="2">
    <location>
        <position position="467"/>
    </location>
    <ligand>
        <name>L-tryptophan</name>
        <dbReference type="ChEBI" id="CHEBI:57912"/>
    </ligand>
</feature>
<feature type="site" description="Important for activity" evidence="1">
    <location>
        <position position="359"/>
    </location>
</feature>
<accession>A8CF75</accession>
<protein>
    <recommendedName>
        <fullName evidence="5">Tryptophan 7-halogenase KtzQ</fullName>
        <ecNumber evidence="3">1.14.19.9</ecNumber>
    </recommendedName>
</protein>
<comment type="function">
    <text evidence="3">Involved in the biosynthesis of kutznerides, actinomycete-derived antifungal and antimicrobial cyclic hexadepsipeptides (PubMed:18828589). Together with KtzR, catalyzes the regiospecific dichlorination of L-tryptophan (L-Trp) to produce 6,7-dichloro-L-tryptophan (PubMed:18828589). KtzQ catalyzes the chlorination of L-Trp at C7 position to yield 7-chlorotryptophan (PubMed:18828589). Can also use 6-chloro-L-tryptophan as substrate and form 6,7-dichloro-L-tryptophan, but has a preference for halogenation at the 7 position of unmodified L-Trp (PubMed:18828589). Cannot use piperazic acid or gamma,delta-dehydropiperazic acid (PubMed:18828589).</text>
</comment>
<comment type="catalytic activity">
    <reaction evidence="3">
        <text>L-tryptophan + FADH2 + chloride + O2 = 7-chloro-L-tryptophan + FAD + 2 H2O</text>
        <dbReference type="Rhea" id="RHEA:26494"/>
        <dbReference type="ChEBI" id="CHEBI:15377"/>
        <dbReference type="ChEBI" id="CHEBI:15379"/>
        <dbReference type="ChEBI" id="CHEBI:17996"/>
        <dbReference type="ChEBI" id="CHEBI:57692"/>
        <dbReference type="ChEBI" id="CHEBI:57912"/>
        <dbReference type="ChEBI" id="CHEBI:58307"/>
        <dbReference type="ChEBI" id="CHEBI:58713"/>
        <dbReference type="EC" id="1.14.19.9"/>
    </reaction>
    <physiologicalReaction direction="left-to-right" evidence="3">
        <dbReference type="Rhea" id="RHEA:26495"/>
    </physiologicalReaction>
</comment>
<comment type="biophysicochemical properties">
    <kinetics>
        <text evidence="3">kcat is 0.19 min(-1) with L-Trp as substrate (PubMed:18828589). kcat is 0.07 min(-1) with 6-chloro-L-tryptophan as substrate (PubMed:18828589).</text>
    </kinetics>
</comment>
<comment type="similarity">
    <text evidence="6">Belongs to the flavin-dependent halogenase family. Bacterial tryptophan halogenase subfamily.</text>
</comment>
<evidence type="ECO:0000250" key="1">
    <source>
        <dbReference type="UniProtKB" id="P95480"/>
    </source>
</evidence>
<evidence type="ECO:0000250" key="2">
    <source>
        <dbReference type="UniProtKB" id="Q8KHZ8"/>
    </source>
</evidence>
<evidence type="ECO:0000269" key="3">
    <source>
    </source>
</evidence>
<evidence type="ECO:0000303" key="4">
    <source>
    </source>
</evidence>
<evidence type="ECO:0000303" key="5">
    <source>
    </source>
</evidence>
<evidence type="ECO:0000305" key="6"/>
<evidence type="ECO:0000312" key="7">
    <source>
        <dbReference type="EMBL" id="EWM18621.1"/>
    </source>
</evidence>
<keyword id="KW-0274">FAD</keyword>
<keyword id="KW-0285">Flavoprotein</keyword>
<keyword id="KW-0547">Nucleotide-binding</keyword>
<keyword id="KW-0560">Oxidoreductase</keyword>
<keyword id="KW-1185">Reference proteome</keyword>
<gene>
    <name evidence="4" type="primary">ktzQ</name>
    <name evidence="7" type="ORF">KUTG_08925</name>
</gene>
<sequence>MDDNRIRSILVLGGGTAGWMSACYLSKALGPGVEVTVLEAPSISRIRVGEATIPNLHKVFFDFLGIAEDEWMRECNASYKAAVRFVNWRTPGDGQATPRRRPDGRPDHFDHLFGQLPEHENLPLSQYWAHRRLNGLTDEPFDRSCYVQPELLDRKLSPRLMDGTKLASYAWHFDADLVADFLCRFAVQKLNVTHVQDVFTHADLDQRGHITAVNTESGRTLAADLFIDCSGFRSVLMGKVMQEPFLDMSKHLLNDRAVALMLPHDDEKVGIEPYTSSLAMRSGWSWKIPLLGRFGSGYVYSSQFTSQDEAAEELCRMWDVDPAEQTFNNVRFRVGRSRRAWVRNCVAIGVSAMFVEPLESTGLYFSYASLYQLVKHFPDKRFRPILADRFNREVATMYDDTRDFLQAHFSLSPRDDSEFWRACKELPFADGFAEKVEMYRAGLPVELPVTIDDGHYYGNFEAEFRNFWTNSNYYCIFAGLGFLPEHPLPVLEFRPEAVDRAEPVFAAVRRRTEELVATAPTMQAYLRRLHQGT</sequence>